<feature type="chain" id="PRO_0000135955" description="Replication factor C large subunit">
    <location>
        <begin position="1"/>
        <end position="486"/>
    </location>
</feature>
<feature type="region of interest" description="Disordered" evidence="2">
    <location>
        <begin position="419"/>
        <end position="486"/>
    </location>
</feature>
<feature type="compositionally biased region" description="Basic and acidic residues" evidence="2">
    <location>
        <begin position="420"/>
        <end position="432"/>
    </location>
</feature>
<feature type="compositionally biased region" description="Basic and acidic residues" evidence="2">
    <location>
        <begin position="442"/>
        <end position="480"/>
    </location>
</feature>
<feature type="binding site" evidence="1">
    <location>
        <begin position="46"/>
        <end position="53"/>
    </location>
    <ligand>
        <name>ATP</name>
        <dbReference type="ChEBI" id="CHEBI:30616"/>
    </ligand>
</feature>
<protein>
    <recommendedName>
        <fullName evidence="1">Replication factor C large subunit</fullName>
        <shortName evidence="1">RFC large subunit</shortName>
    </recommendedName>
    <alternativeName>
        <fullName evidence="1">Clamp loader large subunit</fullName>
    </alternativeName>
</protein>
<evidence type="ECO:0000255" key="1">
    <source>
        <dbReference type="HAMAP-Rule" id="MF_01508"/>
    </source>
</evidence>
<evidence type="ECO:0000256" key="2">
    <source>
        <dbReference type="SAM" id="MobiDB-lite"/>
    </source>
</evidence>
<sequence length="486" mass="54502">MEEWVEKYRPKSLNDVAGHNKTKQALIEWIESIIGGQNQKPILLAGPPGSGKTTLAYAIANDYAFDVIELNASDKRNKDVISQVVGTAATSKSLTGRRTLIVLDEVDGLSGNDDRGGVAEIIKVLKTAENPVILTANDVYKPALMTLRNSVNLINVGSVHTNSIPPVLRRIALKEGFEIDEKIIKMIASHSGGDLRAAINDLQSLATGGSIEIEDAKELPDRDSEKSIFDAMRIIMKTTHYDIATSATRDVKEDIGTIEEWISENLPKEYLKYKDLAEGYDYLSKSDVFLGRVYRRQYFGLWRYASALMTAGTALAKEEKYRGFTRYGPPAIFTKLSRTKGSRQKMKDILKKIALKTHTSTKRARNTVDYLTVIFESNAEVSAELVEYYELTKDEIEFLTNKTITKKILSVIAGKKPKVKKETPKKTEKPKEVMPIIPKRPRISEPPKEPLKEVIEETLEKSVEKADTKEEKKKDPKKQATLDSFF</sequence>
<comment type="function">
    <text evidence="1">Part of the RFC clamp loader complex which loads the PCNA sliding clamp onto DNA.</text>
</comment>
<comment type="subunit">
    <text evidence="1">Heteromultimer composed of small subunits (RfcS) and large subunits (RfcL).</text>
</comment>
<comment type="similarity">
    <text evidence="1">Belongs to the activator 1 small subunits family. RfcL subfamily.</text>
</comment>
<accession>Q6M0E9</accession>
<keyword id="KW-0067">ATP-binding</keyword>
<keyword id="KW-0235">DNA replication</keyword>
<keyword id="KW-0547">Nucleotide-binding</keyword>
<keyword id="KW-1185">Reference proteome</keyword>
<name>RFCL_METMP</name>
<proteinExistence type="inferred from homology"/>
<gene>
    <name evidence="1" type="primary">rfcL</name>
    <name type="synonym">rfcB</name>
    <name type="ordered locus">MMP0322</name>
</gene>
<reference key="1">
    <citation type="journal article" date="2004" name="J. Bacteriol.">
        <title>Complete genome sequence of the genetically tractable hydrogenotrophic methanogen Methanococcus maripaludis.</title>
        <authorList>
            <person name="Hendrickson E.L."/>
            <person name="Kaul R."/>
            <person name="Zhou Y."/>
            <person name="Bovee D."/>
            <person name="Chapman P."/>
            <person name="Chung J."/>
            <person name="Conway de Macario E."/>
            <person name="Dodsworth J.A."/>
            <person name="Gillett W."/>
            <person name="Graham D.E."/>
            <person name="Hackett M."/>
            <person name="Haydock A.K."/>
            <person name="Kang A."/>
            <person name="Land M.L."/>
            <person name="Levy R."/>
            <person name="Lie T.J."/>
            <person name="Major T.A."/>
            <person name="Moore B.C."/>
            <person name="Porat I."/>
            <person name="Palmeiri A."/>
            <person name="Rouse G."/>
            <person name="Saenphimmachak C."/>
            <person name="Soell D."/>
            <person name="Van Dien S."/>
            <person name="Wang T."/>
            <person name="Whitman W.B."/>
            <person name="Xia Q."/>
            <person name="Zhang Y."/>
            <person name="Larimer F.W."/>
            <person name="Olson M.V."/>
            <person name="Leigh J.A."/>
        </authorList>
    </citation>
    <scope>NUCLEOTIDE SEQUENCE [LARGE SCALE GENOMIC DNA]</scope>
    <source>
        <strain>DSM 14266 / JCM 13030 / NBRC 101832 / S2 / LL</strain>
    </source>
</reference>
<organism>
    <name type="scientific">Methanococcus maripaludis (strain DSM 14266 / JCM 13030 / NBRC 101832 / S2 / LL)</name>
    <dbReference type="NCBI Taxonomy" id="267377"/>
    <lineage>
        <taxon>Archaea</taxon>
        <taxon>Methanobacteriati</taxon>
        <taxon>Methanobacteriota</taxon>
        <taxon>Methanomada group</taxon>
        <taxon>Methanococci</taxon>
        <taxon>Methanococcales</taxon>
        <taxon>Methanococcaceae</taxon>
        <taxon>Methanococcus</taxon>
    </lineage>
</organism>
<dbReference type="EMBL" id="BX950229">
    <property type="protein sequence ID" value="CAF29878.1"/>
    <property type="molecule type" value="Genomic_DNA"/>
</dbReference>
<dbReference type="RefSeq" id="WP_011170266.1">
    <property type="nucleotide sequence ID" value="NC_005791.1"/>
</dbReference>
<dbReference type="SMR" id="Q6M0E9"/>
<dbReference type="STRING" id="267377.MMP0322"/>
<dbReference type="EnsemblBacteria" id="CAF29878">
    <property type="protein sequence ID" value="CAF29878"/>
    <property type="gene ID" value="MMP0322"/>
</dbReference>
<dbReference type="GeneID" id="2761723"/>
<dbReference type="KEGG" id="mmp:MMP0322"/>
<dbReference type="PATRIC" id="fig|267377.15.peg.325"/>
<dbReference type="eggNOG" id="arCOG00470">
    <property type="taxonomic scope" value="Archaea"/>
</dbReference>
<dbReference type="HOGENOM" id="CLU_027255_1_0_2"/>
<dbReference type="OrthoDB" id="8658at2157"/>
<dbReference type="Proteomes" id="UP000000590">
    <property type="component" value="Chromosome"/>
</dbReference>
<dbReference type="GO" id="GO:0005524">
    <property type="term" value="F:ATP binding"/>
    <property type="evidence" value="ECO:0007669"/>
    <property type="project" value="UniProtKB-UniRule"/>
</dbReference>
<dbReference type="GO" id="GO:0016887">
    <property type="term" value="F:ATP hydrolysis activity"/>
    <property type="evidence" value="ECO:0007669"/>
    <property type="project" value="InterPro"/>
</dbReference>
<dbReference type="GO" id="GO:0003689">
    <property type="term" value="F:DNA clamp loader activity"/>
    <property type="evidence" value="ECO:0007669"/>
    <property type="project" value="UniProtKB-UniRule"/>
</dbReference>
<dbReference type="GO" id="GO:0006260">
    <property type="term" value="P:DNA replication"/>
    <property type="evidence" value="ECO:0007669"/>
    <property type="project" value="UniProtKB-UniRule"/>
</dbReference>
<dbReference type="CDD" id="cd00009">
    <property type="entry name" value="AAA"/>
    <property type="match status" value="1"/>
</dbReference>
<dbReference type="CDD" id="cd18140">
    <property type="entry name" value="HLD_clamp_RFC"/>
    <property type="match status" value="1"/>
</dbReference>
<dbReference type="Gene3D" id="1.10.8.60">
    <property type="match status" value="1"/>
</dbReference>
<dbReference type="Gene3D" id="3.40.50.300">
    <property type="entry name" value="P-loop containing nucleotide triphosphate hydrolases"/>
    <property type="match status" value="1"/>
</dbReference>
<dbReference type="HAMAP" id="MF_01508">
    <property type="entry name" value="RfcL"/>
    <property type="match status" value="1"/>
</dbReference>
<dbReference type="InterPro" id="IPR003593">
    <property type="entry name" value="AAA+_ATPase"/>
</dbReference>
<dbReference type="InterPro" id="IPR003959">
    <property type="entry name" value="ATPase_AAA_core"/>
</dbReference>
<dbReference type="InterPro" id="IPR027417">
    <property type="entry name" value="P-loop_NTPase"/>
</dbReference>
<dbReference type="InterPro" id="IPR023935">
    <property type="entry name" value="Rep_factor-C_lsu"/>
</dbReference>
<dbReference type="InterPro" id="IPR047854">
    <property type="entry name" value="RFC_lid"/>
</dbReference>
<dbReference type="NCBIfam" id="NF003229">
    <property type="entry name" value="PRK04195.1-5"/>
    <property type="match status" value="1"/>
</dbReference>
<dbReference type="NCBIfam" id="NF003230">
    <property type="entry name" value="PRK04195.1-6"/>
    <property type="match status" value="1"/>
</dbReference>
<dbReference type="PANTHER" id="PTHR23389">
    <property type="entry name" value="CHROMOSOME TRANSMISSION FIDELITY FACTOR 18"/>
    <property type="match status" value="1"/>
</dbReference>
<dbReference type="PANTHER" id="PTHR23389:SF6">
    <property type="entry name" value="REPLICATION FACTOR C SUBUNIT 1"/>
    <property type="match status" value="1"/>
</dbReference>
<dbReference type="Pfam" id="PF00004">
    <property type="entry name" value="AAA"/>
    <property type="match status" value="1"/>
</dbReference>
<dbReference type="Pfam" id="PF21960">
    <property type="entry name" value="RCF1-5-like_lid"/>
    <property type="match status" value="1"/>
</dbReference>
<dbReference type="SMART" id="SM00382">
    <property type="entry name" value="AAA"/>
    <property type="match status" value="1"/>
</dbReference>
<dbReference type="SUPFAM" id="SSF52540">
    <property type="entry name" value="P-loop containing nucleoside triphosphate hydrolases"/>
    <property type="match status" value="1"/>
</dbReference>